<evidence type="ECO:0000255" key="1">
    <source>
        <dbReference type="HAMAP-Rule" id="MF_00399"/>
    </source>
</evidence>
<evidence type="ECO:0000256" key="2">
    <source>
        <dbReference type="SAM" id="MobiDB-lite"/>
    </source>
</evidence>
<dbReference type="EC" id="1.8.1.8" evidence="1"/>
<dbReference type="EMBL" id="CP000305">
    <property type="protein sequence ID" value="ABG19652.1"/>
    <property type="molecule type" value="Genomic_DNA"/>
</dbReference>
<dbReference type="EMBL" id="ACNQ01000017">
    <property type="protein sequence ID" value="EEO75842.1"/>
    <property type="molecule type" value="Genomic_DNA"/>
</dbReference>
<dbReference type="RefSeq" id="WP_002209121.1">
    <property type="nucleotide sequence ID" value="NZ_ACNQ01000017.1"/>
</dbReference>
<dbReference type="SMR" id="Q1CEC8"/>
<dbReference type="KEGG" id="ypn:YPN_3325"/>
<dbReference type="HOGENOM" id="CLU_014657_3_0_6"/>
<dbReference type="Proteomes" id="UP000008936">
    <property type="component" value="Chromosome"/>
</dbReference>
<dbReference type="GO" id="GO:0005886">
    <property type="term" value="C:plasma membrane"/>
    <property type="evidence" value="ECO:0007669"/>
    <property type="project" value="UniProtKB-SubCell"/>
</dbReference>
<dbReference type="GO" id="GO:0009055">
    <property type="term" value="F:electron transfer activity"/>
    <property type="evidence" value="ECO:0007669"/>
    <property type="project" value="UniProtKB-UniRule"/>
</dbReference>
<dbReference type="GO" id="GO:0047134">
    <property type="term" value="F:protein-disulfide reductase [NAD(P)H] activity"/>
    <property type="evidence" value="ECO:0007669"/>
    <property type="project" value="UniProtKB-UniRule"/>
</dbReference>
<dbReference type="GO" id="GO:0045454">
    <property type="term" value="P:cell redox homeostasis"/>
    <property type="evidence" value="ECO:0007669"/>
    <property type="project" value="TreeGrafter"/>
</dbReference>
<dbReference type="GO" id="GO:0017004">
    <property type="term" value="P:cytochrome complex assembly"/>
    <property type="evidence" value="ECO:0007669"/>
    <property type="project" value="UniProtKB-UniRule"/>
</dbReference>
<dbReference type="CDD" id="cd02953">
    <property type="entry name" value="DsbDgamma"/>
    <property type="match status" value="1"/>
</dbReference>
<dbReference type="FunFam" id="2.60.40.1250:FF:000001">
    <property type="entry name" value="Thiol:disulfide interchange protein DsbD"/>
    <property type="match status" value="1"/>
</dbReference>
<dbReference type="FunFam" id="3.40.30.10:FF:000116">
    <property type="entry name" value="Thiol:disulfide interchange protein DsbD"/>
    <property type="match status" value="1"/>
</dbReference>
<dbReference type="Gene3D" id="3.40.30.10">
    <property type="entry name" value="Glutaredoxin"/>
    <property type="match status" value="1"/>
</dbReference>
<dbReference type="Gene3D" id="2.60.40.1250">
    <property type="entry name" value="Thiol:disulfide interchange protein DsbD, N-terminal domain"/>
    <property type="match status" value="1"/>
</dbReference>
<dbReference type="HAMAP" id="MF_00399">
    <property type="entry name" value="DbsD"/>
    <property type="match status" value="1"/>
</dbReference>
<dbReference type="InterPro" id="IPR003834">
    <property type="entry name" value="Cyt_c_assmbl_TM_dom"/>
</dbReference>
<dbReference type="InterPro" id="IPR035671">
    <property type="entry name" value="DsbD_gamma"/>
</dbReference>
<dbReference type="InterPro" id="IPR028250">
    <property type="entry name" value="DsbDN"/>
</dbReference>
<dbReference type="InterPro" id="IPR036929">
    <property type="entry name" value="DsbDN_sf"/>
</dbReference>
<dbReference type="InterPro" id="IPR022910">
    <property type="entry name" value="Thiol_diS_interchange_DbsD"/>
</dbReference>
<dbReference type="InterPro" id="IPR012336">
    <property type="entry name" value="Thioredoxin-like_fold"/>
</dbReference>
<dbReference type="InterPro" id="IPR036249">
    <property type="entry name" value="Thioredoxin-like_sf"/>
</dbReference>
<dbReference type="InterPro" id="IPR017937">
    <property type="entry name" value="Thioredoxin_CS"/>
</dbReference>
<dbReference type="InterPro" id="IPR013766">
    <property type="entry name" value="Thioredoxin_domain"/>
</dbReference>
<dbReference type="NCBIfam" id="NF001419">
    <property type="entry name" value="PRK00293.1"/>
    <property type="match status" value="1"/>
</dbReference>
<dbReference type="PANTHER" id="PTHR32234">
    <property type="entry name" value="THIOL:DISULFIDE INTERCHANGE PROTEIN DSBD"/>
    <property type="match status" value="1"/>
</dbReference>
<dbReference type="PANTHER" id="PTHR32234:SF0">
    <property type="entry name" value="THIOL:DISULFIDE INTERCHANGE PROTEIN DSBD"/>
    <property type="match status" value="1"/>
</dbReference>
<dbReference type="Pfam" id="PF11412">
    <property type="entry name" value="DsbD_N"/>
    <property type="match status" value="1"/>
</dbReference>
<dbReference type="Pfam" id="PF02683">
    <property type="entry name" value="DsbD_TM"/>
    <property type="match status" value="1"/>
</dbReference>
<dbReference type="Pfam" id="PF13098">
    <property type="entry name" value="Thioredoxin_2"/>
    <property type="match status" value="1"/>
</dbReference>
<dbReference type="SUPFAM" id="SSF74863">
    <property type="entry name" value="Thiol:disulfide interchange protein DsbD, N-terminal domain (DsbD-alpha)"/>
    <property type="match status" value="1"/>
</dbReference>
<dbReference type="SUPFAM" id="SSF52833">
    <property type="entry name" value="Thioredoxin-like"/>
    <property type="match status" value="1"/>
</dbReference>
<dbReference type="PROSITE" id="PS00194">
    <property type="entry name" value="THIOREDOXIN_1"/>
    <property type="match status" value="1"/>
</dbReference>
<dbReference type="PROSITE" id="PS51352">
    <property type="entry name" value="THIOREDOXIN_2"/>
    <property type="match status" value="1"/>
</dbReference>
<reference key="1">
    <citation type="journal article" date="2006" name="J. Bacteriol.">
        <title>Complete genome sequence of Yersinia pestis strains Antiqua and Nepal516: evidence of gene reduction in an emerging pathogen.</title>
        <authorList>
            <person name="Chain P.S.G."/>
            <person name="Hu P."/>
            <person name="Malfatti S.A."/>
            <person name="Radnedge L."/>
            <person name="Larimer F."/>
            <person name="Vergez L.M."/>
            <person name="Worsham P."/>
            <person name="Chu M.C."/>
            <person name="Andersen G.L."/>
        </authorList>
    </citation>
    <scope>NUCLEOTIDE SEQUENCE [LARGE SCALE GENOMIC DNA]</scope>
    <source>
        <strain>Nepal516</strain>
    </source>
</reference>
<reference key="2">
    <citation type="submission" date="2009-04" db="EMBL/GenBank/DDBJ databases">
        <title>Yersinia pestis Nepal516A whole genome shotgun sequencing project.</title>
        <authorList>
            <person name="Plunkett G. III"/>
            <person name="Anderson B.D."/>
            <person name="Baumler D.J."/>
            <person name="Burland V."/>
            <person name="Cabot E.L."/>
            <person name="Glasner J.D."/>
            <person name="Mau B."/>
            <person name="Neeno-Eckwall E."/>
            <person name="Perna N.T."/>
            <person name="Munk A.C."/>
            <person name="Tapia R."/>
            <person name="Green L.D."/>
            <person name="Rogers Y.C."/>
            <person name="Detter J.C."/>
            <person name="Bruce D.C."/>
            <person name="Brettin T.S."/>
        </authorList>
    </citation>
    <scope>NUCLEOTIDE SEQUENCE [LARGE SCALE GENOMIC DNA]</scope>
    <source>
        <strain>Nepal516</strain>
    </source>
</reference>
<feature type="signal peptide" evidence="1">
    <location>
        <begin position="1"/>
        <end position="24"/>
    </location>
</feature>
<feature type="chain" id="PRO_5000115590" description="Thiol:disulfide interchange protein DsbD">
    <location>
        <begin position="25"/>
        <end position="595"/>
    </location>
</feature>
<feature type="transmembrane region" description="Helical" evidence="1">
    <location>
        <begin position="197"/>
        <end position="217"/>
    </location>
</feature>
<feature type="transmembrane region" description="Helical" evidence="1">
    <location>
        <begin position="233"/>
        <end position="253"/>
    </location>
</feature>
<feature type="transmembrane region" description="Helical" evidence="1">
    <location>
        <begin position="270"/>
        <end position="290"/>
    </location>
</feature>
<feature type="transmembrane region" description="Helical" evidence="1">
    <location>
        <begin position="311"/>
        <end position="331"/>
    </location>
</feature>
<feature type="transmembrane region" description="Helical" evidence="1">
    <location>
        <begin position="332"/>
        <end position="352"/>
    </location>
</feature>
<feature type="transmembrane region" description="Helical" evidence="1">
    <location>
        <begin position="353"/>
        <end position="373"/>
    </location>
</feature>
<feature type="transmembrane region" description="Helical" evidence="1">
    <location>
        <begin position="384"/>
        <end position="404"/>
    </location>
</feature>
<feature type="transmembrane region" description="Helical" evidence="1">
    <location>
        <begin position="411"/>
        <end position="431"/>
    </location>
</feature>
<feature type="transmembrane region" description="Helical" evidence="1">
    <location>
        <begin position="435"/>
        <end position="455"/>
    </location>
</feature>
<feature type="domain" description="Thioredoxin" evidence="1">
    <location>
        <begin position="452"/>
        <end position="592"/>
    </location>
</feature>
<feature type="region of interest" description="Disordered" evidence="2">
    <location>
        <begin position="166"/>
        <end position="186"/>
    </location>
</feature>
<feature type="disulfide bond" description="Redox-active" evidence="1">
    <location>
        <begin position="134"/>
        <end position="140"/>
    </location>
</feature>
<feature type="disulfide bond" description="Redox-active" evidence="1">
    <location>
        <begin position="209"/>
        <end position="331"/>
    </location>
</feature>
<feature type="disulfide bond" description="Redox-active" evidence="1">
    <location>
        <begin position="507"/>
        <end position="510"/>
    </location>
</feature>
<protein>
    <recommendedName>
        <fullName evidence="1">Thiol:disulfide interchange protein DsbD</fullName>
        <ecNumber evidence="1">1.8.1.8</ecNumber>
    </recommendedName>
    <alternativeName>
        <fullName evidence="1">Protein-disulfide reductase</fullName>
        <shortName evidence="1">Disulfide reductase</shortName>
    </alternativeName>
</protein>
<organism>
    <name type="scientific">Yersinia pestis bv. Antiqua (strain Nepal516)</name>
    <dbReference type="NCBI Taxonomy" id="377628"/>
    <lineage>
        <taxon>Bacteria</taxon>
        <taxon>Pseudomonadati</taxon>
        <taxon>Pseudomonadota</taxon>
        <taxon>Gammaproteobacteria</taxon>
        <taxon>Enterobacterales</taxon>
        <taxon>Yersiniaceae</taxon>
        <taxon>Yersinia</taxon>
    </lineage>
</organism>
<name>DSBD_YERPN</name>
<keyword id="KW-0997">Cell inner membrane</keyword>
<keyword id="KW-1003">Cell membrane</keyword>
<keyword id="KW-0201">Cytochrome c-type biogenesis</keyword>
<keyword id="KW-1015">Disulfide bond</keyword>
<keyword id="KW-0249">Electron transport</keyword>
<keyword id="KW-0472">Membrane</keyword>
<keyword id="KW-0520">NAD</keyword>
<keyword id="KW-0560">Oxidoreductase</keyword>
<keyword id="KW-0676">Redox-active center</keyword>
<keyword id="KW-0732">Signal</keyword>
<keyword id="KW-0812">Transmembrane</keyword>
<keyword id="KW-1133">Transmembrane helix</keyword>
<keyword id="KW-0813">Transport</keyword>
<proteinExistence type="inferred from homology"/>
<comment type="function">
    <text evidence="1">Required to facilitate the formation of correct disulfide bonds in some periplasmic proteins and for the assembly of the periplasmic c-type cytochromes. Acts by transferring electrons from cytoplasmic thioredoxin to the periplasm. This transfer involves a cascade of disulfide bond formation and reduction steps.</text>
</comment>
<comment type="catalytic activity">
    <reaction evidence="1">
        <text>[protein]-dithiol + NAD(+) = [protein]-disulfide + NADH + H(+)</text>
        <dbReference type="Rhea" id="RHEA:18749"/>
        <dbReference type="Rhea" id="RHEA-COMP:10593"/>
        <dbReference type="Rhea" id="RHEA-COMP:10594"/>
        <dbReference type="ChEBI" id="CHEBI:15378"/>
        <dbReference type="ChEBI" id="CHEBI:29950"/>
        <dbReference type="ChEBI" id="CHEBI:50058"/>
        <dbReference type="ChEBI" id="CHEBI:57540"/>
        <dbReference type="ChEBI" id="CHEBI:57945"/>
        <dbReference type="EC" id="1.8.1.8"/>
    </reaction>
</comment>
<comment type="catalytic activity">
    <reaction evidence="1">
        <text>[protein]-dithiol + NADP(+) = [protein]-disulfide + NADPH + H(+)</text>
        <dbReference type="Rhea" id="RHEA:18753"/>
        <dbReference type="Rhea" id="RHEA-COMP:10593"/>
        <dbReference type="Rhea" id="RHEA-COMP:10594"/>
        <dbReference type="ChEBI" id="CHEBI:15378"/>
        <dbReference type="ChEBI" id="CHEBI:29950"/>
        <dbReference type="ChEBI" id="CHEBI:50058"/>
        <dbReference type="ChEBI" id="CHEBI:57783"/>
        <dbReference type="ChEBI" id="CHEBI:58349"/>
        <dbReference type="EC" id="1.8.1.8"/>
    </reaction>
</comment>
<comment type="subcellular location">
    <subcellularLocation>
        <location evidence="1">Cell inner membrane</location>
        <topology evidence="1">Multi-pass membrane protein</topology>
    </subcellularLocation>
</comment>
<comment type="similarity">
    <text evidence="1">Belongs to the thioredoxin family. DsbD subfamily.</text>
</comment>
<sequence>MAQRFITLILLLCSVLLAPHSAQSSLFGENASFGTKNSQSRFIPVDQAFAFDFHQQGDQLNLSWQIHPGYYLYRQQIKIVPQQAALGAFTLPEGITHHDEFYGEVEIFKQQLTLKIPITQAAEQASVSVTYQGCAEAGFCYPPETRVIPLDVVVAASTASGTAAVNSSATVNPPATTQPEGDATPVPSTLPFSPLWALLIGIGIAFTPCVLPMYPLISAVILGREKPHSQRRILILAVVYVQGMALTYTLLGLVVAAAGLQFQAALQHPYVLIGLSVLFVLLALSMFGLYSLQLPSSLQTRLTQWSNSQRGGSLAGVFAMGALAGLICSPCTTAPLSAILLYIAQSGNMLAGGGTLYLYALGMGIPLVVVTLFGNKLIPRSGPWMQYVKEAFGFVILALPVFLLERVLGDVWGLRLWSLLAVAFFGWAFVLSLKAHAGWVRVCQLLLLAALLIVARPLQDWAFNGNTQQNAVKHINFQPVANLPQLQAVLAQAQGKPVMLDLYADWCVACKEFEKYTFSDDKVQRQLANTLLLQADVTANNAEHATLLKKFNVLGLPTILFFDSQGNEITAARVTGFMDAAQFLQHLQNTPAVTK</sequence>
<gene>
    <name evidence="1" type="primary">dsbD</name>
    <name type="ordered locus">YPN_3325</name>
    <name type="ORF">YP516_3780</name>
</gene>
<accession>Q1CEC8</accession>
<accession>C4GY42</accession>